<gene>
    <name evidence="1" type="primary">psaJ</name>
</gene>
<sequence>MRDIKTYLSVAPVLSTLWFGALAGLLIEINRLFPDALSFPFF</sequence>
<accession>A1E9L0</accession>
<dbReference type="EMBL" id="EF115541">
    <property type="protein sequence ID" value="ABK79432.1"/>
    <property type="molecule type" value="Genomic_DNA"/>
</dbReference>
<dbReference type="RefSeq" id="YP_874672.1">
    <property type="nucleotide sequence ID" value="NC_008590.1"/>
</dbReference>
<dbReference type="PDB" id="7EW6">
    <property type="method" value="EM"/>
    <property type="resolution" value="3.40 A"/>
    <property type="chains" value="J=1-42"/>
</dbReference>
<dbReference type="PDB" id="7EWK">
    <property type="method" value="EM"/>
    <property type="resolution" value="3.88 A"/>
    <property type="chains" value="J=1-42"/>
</dbReference>
<dbReference type="PDBsum" id="7EW6"/>
<dbReference type="PDBsum" id="7EWK"/>
<dbReference type="SMR" id="A1E9L0"/>
<dbReference type="GeneID" id="4525069"/>
<dbReference type="GO" id="GO:0009535">
    <property type="term" value="C:chloroplast thylakoid membrane"/>
    <property type="evidence" value="ECO:0007669"/>
    <property type="project" value="UniProtKB-SubCell"/>
</dbReference>
<dbReference type="GO" id="GO:0009522">
    <property type="term" value="C:photosystem I"/>
    <property type="evidence" value="ECO:0007669"/>
    <property type="project" value="UniProtKB-KW"/>
</dbReference>
<dbReference type="GO" id="GO:0015979">
    <property type="term" value="P:photosynthesis"/>
    <property type="evidence" value="ECO:0007669"/>
    <property type="project" value="UniProtKB-UniRule"/>
</dbReference>
<dbReference type="FunFam" id="1.20.5.510:FF:000001">
    <property type="entry name" value="Photosystem I reaction center subunit IX"/>
    <property type="match status" value="1"/>
</dbReference>
<dbReference type="Gene3D" id="1.20.5.510">
    <property type="entry name" value="Single helix bin"/>
    <property type="match status" value="1"/>
</dbReference>
<dbReference type="HAMAP" id="MF_00522">
    <property type="entry name" value="PSI_PsaJ"/>
    <property type="match status" value="1"/>
</dbReference>
<dbReference type="InterPro" id="IPR002615">
    <property type="entry name" value="PSI_PsaJ"/>
</dbReference>
<dbReference type="InterPro" id="IPR036062">
    <property type="entry name" value="PSI_PsaJ_sf"/>
</dbReference>
<dbReference type="PANTHER" id="PTHR36082">
    <property type="match status" value="1"/>
</dbReference>
<dbReference type="PANTHER" id="PTHR36082:SF2">
    <property type="entry name" value="PHOTOSYSTEM I REACTION CENTER SUBUNIT IX"/>
    <property type="match status" value="1"/>
</dbReference>
<dbReference type="Pfam" id="PF01701">
    <property type="entry name" value="PSI_PsaJ"/>
    <property type="match status" value="1"/>
</dbReference>
<dbReference type="SUPFAM" id="SSF81544">
    <property type="entry name" value="Subunit IX of photosystem I reaction centre, PsaJ"/>
    <property type="match status" value="1"/>
</dbReference>
<organism>
    <name type="scientific">Hordeum vulgare</name>
    <name type="common">Barley</name>
    <dbReference type="NCBI Taxonomy" id="4513"/>
    <lineage>
        <taxon>Eukaryota</taxon>
        <taxon>Viridiplantae</taxon>
        <taxon>Streptophyta</taxon>
        <taxon>Embryophyta</taxon>
        <taxon>Tracheophyta</taxon>
        <taxon>Spermatophyta</taxon>
        <taxon>Magnoliopsida</taxon>
        <taxon>Liliopsida</taxon>
        <taxon>Poales</taxon>
        <taxon>Poaceae</taxon>
        <taxon>BOP clade</taxon>
        <taxon>Pooideae</taxon>
        <taxon>Triticodae</taxon>
        <taxon>Triticeae</taxon>
        <taxon>Hordeinae</taxon>
        <taxon>Hordeum</taxon>
    </lineage>
</organism>
<comment type="function">
    <text evidence="1">May help in the organization of the PsaE and PsaF subunits.</text>
</comment>
<comment type="subunit">
    <text evidence="2">PSI consists of a core antenna complex that captures photons, and an electron transfer chain that converts photonic excitation into a charge separation. The eukaryotic PSI reaction center is composed of at least 11 subunits. Only detected in green leaves and not etioplasts; PSI is only assembled in green leaves (PubMed:19137553).</text>
</comment>
<comment type="subcellular location">
    <subcellularLocation>
        <location evidence="1 3">Plastid</location>
        <location evidence="1 3">Chloroplast thylakoid membrane</location>
        <topology evidence="1 3">Single-pass membrane protein</topology>
    </subcellularLocation>
</comment>
<comment type="similarity">
    <text evidence="1">Belongs to the PsaJ family.</text>
</comment>
<keyword id="KW-0002">3D-structure</keyword>
<keyword id="KW-0150">Chloroplast</keyword>
<keyword id="KW-0472">Membrane</keyword>
<keyword id="KW-0602">Photosynthesis</keyword>
<keyword id="KW-0603">Photosystem I</keyword>
<keyword id="KW-0934">Plastid</keyword>
<keyword id="KW-0793">Thylakoid</keyword>
<keyword id="KW-0812">Transmembrane</keyword>
<keyword id="KW-1133">Transmembrane helix</keyword>
<reference key="1">
    <citation type="journal article" date="2007" name="Theor. Appl. Genet.">
        <title>Complete chloroplast genome sequences of Hordeum vulgare, Sorghum bicolor and Agrostis stolonifera, and comparative analyses with other grass genomes.</title>
        <authorList>
            <person name="Saski C."/>
            <person name="Lee S.-B."/>
            <person name="Fjellheim S."/>
            <person name="Guda C."/>
            <person name="Jansen R.K."/>
            <person name="Luo H."/>
            <person name="Tomkins J."/>
            <person name="Rognli O.A."/>
            <person name="Daniell H."/>
            <person name="Clarke J.L."/>
        </authorList>
    </citation>
    <scope>NUCLEOTIDE SEQUENCE [LARGE SCALE GENOMIC DNA]</scope>
    <source>
        <strain>cv. Morex</strain>
    </source>
</reference>
<reference key="2">
    <citation type="journal article" date="2009" name="Proteomics">
        <title>Mass spectrometric characterization of membrane integral low molecular weight proteins from photosystem II in barley etioplasts.</title>
        <authorList>
            <person name="Ploescher M."/>
            <person name="Granvogl B."/>
            <person name="Zoryan M."/>
            <person name="Reisinger V."/>
            <person name="Eichacker L.A."/>
        </authorList>
    </citation>
    <scope>IDENTIFICATION BY MASS SPECTROMETRY</scope>
    <scope>SUBUNIT</scope>
    <scope>SUBCELLULAR LOCATION</scope>
    <source>
        <strain>cv. Steffi</strain>
    </source>
</reference>
<name>PSAJ_HORVU</name>
<feature type="chain" id="PRO_0000354150" description="Photosystem I reaction center subunit IX">
    <location>
        <begin position="1"/>
        <end position="42"/>
    </location>
</feature>
<feature type="transmembrane region" description="Helical" evidence="1">
    <location>
        <begin position="7"/>
        <end position="27"/>
    </location>
</feature>
<feature type="helix" evidence="4">
    <location>
        <begin position="2"/>
        <end position="8"/>
    </location>
</feature>
<feature type="helix" evidence="4">
    <location>
        <begin position="11"/>
        <end position="32"/>
    </location>
</feature>
<geneLocation type="chloroplast"/>
<evidence type="ECO:0000255" key="1">
    <source>
        <dbReference type="HAMAP-Rule" id="MF_00522"/>
    </source>
</evidence>
<evidence type="ECO:0000269" key="2">
    <source>
    </source>
</evidence>
<evidence type="ECO:0000305" key="3">
    <source>
    </source>
</evidence>
<evidence type="ECO:0007829" key="4">
    <source>
        <dbReference type="PDB" id="7EW6"/>
    </source>
</evidence>
<proteinExistence type="evidence at protein level"/>
<protein>
    <recommendedName>
        <fullName evidence="1">Photosystem I reaction center subunit IX</fullName>
    </recommendedName>
    <alternativeName>
        <fullName evidence="1">PSI-J</fullName>
    </alternativeName>
</protein>